<protein>
    <recommendedName>
        <fullName evidence="1">Small ribosomal subunit protein bS16</fullName>
    </recommendedName>
    <alternativeName>
        <fullName evidence="3">30S ribosomal protein S16</fullName>
    </alternativeName>
</protein>
<proteinExistence type="inferred from homology"/>
<keyword id="KW-0687">Ribonucleoprotein</keyword>
<keyword id="KW-0689">Ribosomal protein</keyword>
<comment type="similarity">
    <text evidence="1">Belongs to the bacterial ribosomal protein bS16 family.</text>
</comment>
<reference key="1">
    <citation type="submission" date="2007-10" db="EMBL/GenBank/DDBJ databases">
        <title>Complete sequence of Salinispora arenicola CNS-205.</title>
        <authorList>
            <consortium name="US DOE Joint Genome Institute"/>
            <person name="Copeland A."/>
            <person name="Lucas S."/>
            <person name="Lapidus A."/>
            <person name="Barry K."/>
            <person name="Glavina del Rio T."/>
            <person name="Dalin E."/>
            <person name="Tice H."/>
            <person name="Pitluck S."/>
            <person name="Foster B."/>
            <person name="Schmutz J."/>
            <person name="Larimer F."/>
            <person name="Land M."/>
            <person name="Hauser L."/>
            <person name="Kyrpides N."/>
            <person name="Ivanova N."/>
            <person name="Jensen P.R."/>
            <person name="Moore B.S."/>
            <person name="Penn K."/>
            <person name="Jenkins C."/>
            <person name="Udwary D."/>
            <person name="Xiang L."/>
            <person name="Gontang E."/>
            <person name="Richardson P."/>
        </authorList>
    </citation>
    <scope>NUCLEOTIDE SEQUENCE [LARGE SCALE GENOMIC DNA]</scope>
    <source>
        <strain>CNS-205</strain>
    </source>
</reference>
<dbReference type="EMBL" id="CP000850">
    <property type="protein sequence ID" value="ABV97102.1"/>
    <property type="molecule type" value="Genomic_DNA"/>
</dbReference>
<dbReference type="SMR" id="A8M677"/>
<dbReference type="STRING" id="391037.Sare_1194"/>
<dbReference type="KEGG" id="saq:Sare_1194"/>
<dbReference type="PATRIC" id="fig|391037.6.peg.1213"/>
<dbReference type="eggNOG" id="COG0228">
    <property type="taxonomic scope" value="Bacteria"/>
</dbReference>
<dbReference type="HOGENOM" id="CLU_100590_1_1_11"/>
<dbReference type="OrthoDB" id="9807878at2"/>
<dbReference type="GO" id="GO:0005737">
    <property type="term" value="C:cytoplasm"/>
    <property type="evidence" value="ECO:0007669"/>
    <property type="project" value="UniProtKB-ARBA"/>
</dbReference>
<dbReference type="GO" id="GO:0015935">
    <property type="term" value="C:small ribosomal subunit"/>
    <property type="evidence" value="ECO:0007669"/>
    <property type="project" value="TreeGrafter"/>
</dbReference>
<dbReference type="GO" id="GO:0003735">
    <property type="term" value="F:structural constituent of ribosome"/>
    <property type="evidence" value="ECO:0007669"/>
    <property type="project" value="InterPro"/>
</dbReference>
<dbReference type="GO" id="GO:0006412">
    <property type="term" value="P:translation"/>
    <property type="evidence" value="ECO:0007669"/>
    <property type="project" value="UniProtKB-UniRule"/>
</dbReference>
<dbReference type="Gene3D" id="3.30.1320.10">
    <property type="match status" value="1"/>
</dbReference>
<dbReference type="HAMAP" id="MF_00385">
    <property type="entry name" value="Ribosomal_bS16"/>
    <property type="match status" value="1"/>
</dbReference>
<dbReference type="InterPro" id="IPR000307">
    <property type="entry name" value="Ribosomal_bS16"/>
</dbReference>
<dbReference type="InterPro" id="IPR023803">
    <property type="entry name" value="Ribosomal_bS16_dom_sf"/>
</dbReference>
<dbReference type="NCBIfam" id="NF011093">
    <property type="entry name" value="PRK14520.1"/>
    <property type="match status" value="1"/>
</dbReference>
<dbReference type="NCBIfam" id="TIGR00002">
    <property type="entry name" value="S16"/>
    <property type="match status" value="1"/>
</dbReference>
<dbReference type="PANTHER" id="PTHR12919">
    <property type="entry name" value="30S RIBOSOMAL PROTEIN S16"/>
    <property type="match status" value="1"/>
</dbReference>
<dbReference type="PANTHER" id="PTHR12919:SF20">
    <property type="entry name" value="SMALL RIBOSOMAL SUBUNIT PROTEIN BS16M"/>
    <property type="match status" value="1"/>
</dbReference>
<dbReference type="Pfam" id="PF00886">
    <property type="entry name" value="Ribosomal_S16"/>
    <property type="match status" value="1"/>
</dbReference>
<dbReference type="SUPFAM" id="SSF54565">
    <property type="entry name" value="Ribosomal protein S16"/>
    <property type="match status" value="1"/>
</dbReference>
<evidence type="ECO:0000255" key="1">
    <source>
        <dbReference type="HAMAP-Rule" id="MF_00385"/>
    </source>
</evidence>
<evidence type="ECO:0000256" key="2">
    <source>
        <dbReference type="SAM" id="MobiDB-lite"/>
    </source>
</evidence>
<evidence type="ECO:0000305" key="3"/>
<gene>
    <name evidence="1" type="primary">rpsP</name>
    <name type="ordered locus">Sare_1194</name>
</gene>
<organism>
    <name type="scientific">Salinispora arenicola (strain CNS-205)</name>
    <dbReference type="NCBI Taxonomy" id="391037"/>
    <lineage>
        <taxon>Bacteria</taxon>
        <taxon>Bacillati</taxon>
        <taxon>Actinomycetota</taxon>
        <taxon>Actinomycetes</taxon>
        <taxon>Micromonosporales</taxon>
        <taxon>Micromonosporaceae</taxon>
        <taxon>Salinispora</taxon>
    </lineage>
</organism>
<name>RS16_SALAI</name>
<sequence length="158" mass="17130">MAVKIRLLRMGKIRNPQYRIVIADSRTKRDGRAIEFVGIYQPKEDPSVIEVKSDRVQYWLSVGAQPSEAVQRLLEKTGDWQKFKGLPAPEPLKVAPERVDRKAAYEAEAKAAAGLAEAPTKPAKKAPKAEAAPKTEAAPKADAPKTEEQAGAGSGEQG</sequence>
<feature type="chain" id="PRO_1000080166" description="Small ribosomal subunit protein bS16">
    <location>
        <begin position="1"/>
        <end position="158"/>
    </location>
</feature>
<feature type="region of interest" description="Disordered" evidence="2">
    <location>
        <begin position="111"/>
        <end position="158"/>
    </location>
</feature>
<feature type="compositionally biased region" description="Low complexity" evidence="2">
    <location>
        <begin position="111"/>
        <end position="121"/>
    </location>
</feature>
<feature type="compositionally biased region" description="Basic and acidic residues" evidence="2">
    <location>
        <begin position="127"/>
        <end position="148"/>
    </location>
</feature>
<accession>A8M677</accession>